<organism>
    <name type="scientific">Aspergillus oryzae (strain ATCC 42149 / RIB 40)</name>
    <name type="common">Yellow koji mold</name>
    <dbReference type="NCBI Taxonomy" id="510516"/>
    <lineage>
        <taxon>Eukaryota</taxon>
        <taxon>Fungi</taxon>
        <taxon>Dikarya</taxon>
        <taxon>Ascomycota</taxon>
        <taxon>Pezizomycotina</taxon>
        <taxon>Eurotiomycetes</taxon>
        <taxon>Eurotiomycetidae</taxon>
        <taxon>Eurotiales</taxon>
        <taxon>Aspergillaceae</taxon>
        <taxon>Aspergillus</taxon>
        <taxon>Aspergillus subgen. Circumdati</taxon>
    </lineage>
</organism>
<proteinExistence type="evidence at protein level"/>
<feature type="chain" id="PRO_0000436875" description="Transcription factor kojR">
    <location>
        <begin position="1"/>
        <end position="555"/>
    </location>
</feature>
<feature type="DNA-binding region" description="Zn(2)-C6 fungal-type" evidence="1">
    <location>
        <begin position="21"/>
        <end position="47"/>
    </location>
</feature>
<feature type="region of interest" description="Disordered" evidence="2">
    <location>
        <begin position="51"/>
        <end position="73"/>
    </location>
</feature>
<comment type="function">
    <text evidence="4 8 9 11">Transcription factor that regulates the gene cluster that mediates the biosynthesis of 5-hydroxy-2-hydroxymethyl-1,4-pyrone, also know as kojic acid, a by-product in the fermentation process of malting rice that acts as a chelation agent (PubMed:21514215, PubMed:35034313, PubMed:37776988). Negatively regulates the expression of the kojic acid-related protein kap1 (PubMed:34950983). Improves the antioxidant capacity via the accumulation of kojic acid that is also a strong oxidant (PubMed:37776988).</text>
</comment>
<comment type="subcellular location">
    <subcellularLocation>
        <location evidence="1">Nucleus</location>
    </subcellularLocation>
</comment>
<comment type="induction">
    <text evidence="5 7 8 10">Expression is positively regulated by the secondary metabolism general regulator laeA (PubMed:21897021). Expression is negatively regulated by the transcription factor kpeA (PubMed:30790620). Expression is also regulated by the kojic acid related proteins kap1 and kap6 (PubMed:34950983, PubMed:35922587).</text>
</comment>
<comment type="disruption phenotype">
    <text evidence="4 9 10">Impairs the transcription of kojA and kojT, and blocks the production of kojic acid (PubMed:21514215, PubMed:35034313). Leads to the declined expression of kap6 (PubMed:35922587).</text>
</comment>
<comment type="biotechnology">
    <text evidence="3 6 12">Kojic acid can be used for several biotechnological applications, including use as an antibiotic, as an additive to prevent browning of food materials, and as an antioxidant (PubMed:17119644). Kojic acid is also interesting as an inhibitor of tyrosinase (PubMed:7714722). Finally, kojic acid has also been shown to have strong nematicidal activity (PubMed:27197670).</text>
</comment>
<reference key="1">
    <citation type="journal article" date="2005" name="Nature">
        <title>Genome sequencing and analysis of Aspergillus oryzae.</title>
        <authorList>
            <person name="Machida M."/>
            <person name="Asai K."/>
            <person name="Sano M."/>
            <person name="Tanaka T."/>
            <person name="Kumagai T."/>
            <person name="Terai G."/>
            <person name="Kusumoto K."/>
            <person name="Arima T."/>
            <person name="Akita O."/>
            <person name="Kashiwagi Y."/>
            <person name="Abe K."/>
            <person name="Gomi K."/>
            <person name="Horiuchi H."/>
            <person name="Kitamoto K."/>
            <person name="Kobayashi T."/>
            <person name="Takeuchi M."/>
            <person name="Denning D.W."/>
            <person name="Galagan J.E."/>
            <person name="Nierman W.C."/>
            <person name="Yu J."/>
            <person name="Archer D.B."/>
            <person name="Bennett J.W."/>
            <person name="Bhatnagar D."/>
            <person name="Cleveland T.E."/>
            <person name="Fedorova N.D."/>
            <person name="Gotoh O."/>
            <person name="Horikawa H."/>
            <person name="Hosoyama A."/>
            <person name="Ichinomiya M."/>
            <person name="Igarashi R."/>
            <person name="Iwashita K."/>
            <person name="Juvvadi P.R."/>
            <person name="Kato M."/>
            <person name="Kato Y."/>
            <person name="Kin T."/>
            <person name="Kokubun A."/>
            <person name="Maeda H."/>
            <person name="Maeyama N."/>
            <person name="Maruyama J."/>
            <person name="Nagasaki H."/>
            <person name="Nakajima T."/>
            <person name="Oda K."/>
            <person name="Okada K."/>
            <person name="Paulsen I."/>
            <person name="Sakamoto K."/>
            <person name="Sawano T."/>
            <person name="Takahashi M."/>
            <person name="Takase K."/>
            <person name="Terabayashi Y."/>
            <person name="Wortman J.R."/>
            <person name="Yamada O."/>
            <person name="Yamagata Y."/>
            <person name="Anazawa H."/>
            <person name="Hata Y."/>
            <person name="Koide Y."/>
            <person name="Komori T."/>
            <person name="Koyama Y."/>
            <person name="Minetoki T."/>
            <person name="Suharnan S."/>
            <person name="Tanaka A."/>
            <person name="Isono K."/>
            <person name="Kuhara S."/>
            <person name="Ogasawara N."/>
            <person name="Kikuchi H."/>
        </authorList>
    </citation>
    <scope>NUCLEOTIDE SEQUENCE [LARGE SCALE GENOMIC DNA]</scope>
    <source>
        <strain>ATCC 42149 / RIB 40</strain>
    </source>
</reference>
<reference key="2">
    <citation type="journal article" date="1994" name="J. Pharm. Pharmacol.">
        <title>Kojic acid, a cosmetic skin whitening agent, is a slow-binding inhibitor of catecholase activity of tyrosinase.</title>
        <authorList>
            <person name="Cabanes J."/>
            <person name="Chazarra S."/>
            <person name="Garcia-Carmona F."/>
        </authorList>
    </citation>
    <scope>BIOTECHNOLOGY</scope>
</reference>
<reference key="3">
    <citation type="journal article" date="2006" name="Nat. Prod. Rep.">
        <title>From miso, sake and shoyu to cosmetics: a century of science for kojic acid.</title>
        <authorList>
            <person name="Bentley R."/>
        </authorList>
    </citation>
    <scope>REVIEW ON BIOTECHNOLOGY</scope>
</reference>
<reference key="4">
    <citation type="journal article" date="2011" name="Biosci. Biotechnol. Biochem.">
        <title>Aspergillus oryzae laeA regulates kojic acid synthesis genes.</title>
        <authorList>
            <person name="Oda K."/>
            <person name="Kobayashi A."/>
            <person name="Ohashi S."/>
            <person name="Sano M."/>
        </authorList>
    </citation>
    <scope>INDUCTION</scope>
</reference>
<reference key="5">
    <citation type="journal article" date="2011" name="J. Biosci. Bioeng.">
        <title>Kojic acid biosynthesis in Aspergillus oryzae is regulated by a Zn(II)(2)Cys(6) transcriptional activator and induced by kojic acid at the transcriptional level.</title>
        <authorList>
            <person name="Marui J."/>
            <person name="Yamane N."/>
            <person name="Ohashi-Kunihiro S."/>
            <person name="Ando T."/>
            <person name="Terabayashi Y."/>
            <person name="Sano M."/>
            <person name="Ohashi S."/>
            <person name="Ohshima E."/>
            <person name="Tachibana K."/>
            <person name="Higa Y."/>
            <person name="Nishimura M."/>
            <person name="Koike H."/>
            <person name="Machida M."/>
        </authorList>
    </citation>
    <scope>FUNCTION</scope>
    <scope>DISRUPTION PHENOTYPE</scope>
</reference>
<reference key="6">
    <citation type="journal article" date="2016" name="J. Microbiol. Biotechnol.">
        <title>Nematicidal activity of kojic acid produced by Aspergillus oryzae against Meloidogyne incognita.</title>
        <authorList>
            <person name="Kim T.Y."/>
            <person name="Jang J.Y."/>
            <person name="Jeon S.J."/>
            <person name="Lee H.W."/>
            <person name="Bae C.H."/>
            <person name="Yeo J.H."/>
            <person name="Lee H.B."/>
            <person name="Kim I.S."/>
            <person name="Park H.W."/>
            <person name="Kim J.C."/>
        </authorList>
    </citation>
    <scope>BIOTECHNOLOGY</scope>
</reference>
<reference key="7">
    <citation type="journal article" date="2019" name="Fungal Genet. Biol.">
        <title>A unique Zn(II)2-Cys6-type protein, KpeA, is involved in secondary metabolism and conidiation in Aspergillus oryzae.</title>
        <authorList>
            <person name="Arakawa G.Y."/>
            <person name="Kudo H."/>
            <person name="Yanase A."/>
            <person name="Eguchi Y."/>
            <person name="Kodama H."/>
            <person name="Ogawa M."/>
            <person name="Koyama Y."/>
            <person name="Shindo H."/>
            <person name="Hosaka M."/>
            <person name="Tokuoka M."/>
        </authorList>
    </citation>
    <scope>INDUCTION</scope>
</reference>
<reference key="8">
    <citation type="journal article" date="2021" name="Arch. Microbiol.">
        <title>Identification and characterization of a novel gene Aokap1 involved in growth and kojic acid synthesis in Aspergillus oryzae.</title>
        <authorList>
            <person name="Li Y."/>
            <person name="Zhang H."/>
            <person name="Chen Z."/>
            <person name="Fan J."/>
            <person name="Chen T."/>
            <person name="Zeng B."/>
            <person name="Zhang Z."/>
        </authorList>
    </citation>
    <scope>INDUCTION</scope>
    <scope>FUNCTION</scope>
</reference>
<reference key="9">
    <citation type="journal article" date="2022" name="Folia Microbiol. (Praha)">
        <title>Construction of single, double, or triple mutants within kojic acid synthesis genes kojA, kojR, and kojT by the CRISPR/Cas9 tool in Aspergillus oryzae.</title>
        <authorList>
            <person name="Li Y."/>
            <person name="Zhang H."/>
            <person name="Chen Z."/>
            <person name="Fan J."/>
            <person name="Chen T."/>
            <person name="Zeng B."/>
            <person name="Zhang Z."/>
        </authorList>
    </citation>
    <scope>FUNCTION</scope>
    <scope>DISRUPTION PHENOTYPE</scope>
</reference>
<reference key="10">
    <citation type="journal article" date="2022" name="World J. Microbiol. Biotechnol.">
        <title>Disruption of Aokap6 near the kojic acid gene cluster affects the growth and kojic acid production in Aspergillus oryzae.</title>
        <authorList>
            <person name="Chen Z."/>
            <person name="Chen T."/>
            <person name="Wang H."/>
            <person name="Jiang C."/>
            <person name="Liu Y."/>
            <person name="Wu X."/>
            <person name="Li Y."/>
            <person name="Zeng B."/>
            <person name="Zhang Z."/>
        </authorList>
    </citation>
    <scope>DISRUPTION PHENOTYPE</scope>
    <scope>INDUCTION</scope>
</reference>
<reference key="11">
    <citation type="journal article" date="2024" name="Gene">
        <title>Overexpression of kojR and the entire koj gene cluster affect the kojic acid synthesis in Aspergillus oryzae 3.042.</title>
        <authorList>
            <person name="Zhang X."/>
            <person name="Guo R."/>
            <person name="Bi F."/>
            <person name="Chen Y."/>
            <person name="Xue X."/>
            <person name="Wang D."/>
        </authorList>
    </citation>
    <scope>FUNCTION</scope>
</reference>
<accession>Q2U5H9</accession>
<keyword id="KW-0238">DNA-binding</keyword>
<keyword id="KW-0479">Metal-binding</keyword>
<keyword id="KW-0539">Nucleus</keyword>
<keyword id="KW-1185">Reference proteome</keyword>
<keyword id="KW-0804">Transcription</keyword>
<keyword id="KW-0805">Transcription regulation</keyword>
<keyword id="KW-0862">Zinc</keyword>
<sequence length="555" mass="62861">MSLNTDDSGRIRTRQRAKRACETCKLRKRKCDGHEPCTYCLRYEYQCTFKPHPRRKPAASKSSARPSEEEDSPKFLDRVDANQEHMEANSGTAFPHLLGMRLNPQGAPKVYGFSWNLGPRDEPLEPFTNLTDLISREEMEDLASHYLKKIHPVYAVLDPDTLRQKIVARWHDPATAASYDPILCGVAALGSLYSGHQEHPKEGALVQSAKEMLETTRISKTTLLHHATAWILRTIYLRSTNCPHASWMASCSTMHIIEAIGAHQDPELVSLVYSDTADVSVNDESQRRLFWVATVLNSWISYEYGRSRVILRGVSCKPPLPRTGDFTTDLISMYQISERLDPDQNNKLSDLEDALSRVERLTLSHDALILSQSNLALTIYRRLRVASSNISNDILTRIIRLGNDGLEAAVRLAEDRSPWWHVANIPFQFLCILLAIDTRESLSYVGPALRSFRAITRHYSTPTLHTALETIESLVRLSQNKKERDLTLLRDSMQQEDPGLTEQGSTTSQAFNDASWLGATGDLTLPDNFDWDWNVFLDTQVPFFDEGEAGGQRYR</sequence>
<name>KOJR_ASPOR</name>
<dbReference type="EMBL" id="BA000053">
    <property type="protein sequence ID" value="BAE63186.1"/>
    <property type="molecule type" value="Genomic_DNA"/>
</dbReference>
<dbReference type="RefSeq" id="XP_001824319.1">
    <property type="nucleotide sequence ID" value="XM_001824267.1"/>
</dbReference>
<dbReference type="SMR" id="Q2U5H9"/>
<dbReference type="STRING" id="510516.Q2U5H9"/>
<dbReference type="EnsemblFungi" id="BAE63186">
    <property type="protein sequence ID" value="BAE63186"/>
    <property type="gene ID" value="AO090113000137"/>
</dbReference>
<dbReference type="GeneID" id="5995966"/>
<dbReference type="KEGG" id="aor:AO090113000137"/>
<dbReference type="VEuPathDB" id="FungiDB:AO090113000137"/>
<dbReference type="HOGENOM" id="CLU_019691_1_0_1"/>
<dbReference type="OMA" id="CDGHEPC"/>
<dbReference type="OrthoDB" id="53643at5052"/>
<dbReference type="Proteomes" id="UP000006564">
    <property type="component" value="Chromosome 5"/>
</dbReference>
<dbReference type="GO" id="GO:0005634">
    <property type="term" value="C:nucleus"/>
    <property type="evidence" value="ECO:0007669"/>
    <property type="project" value="UniProtKB-SubCell"/>
</dbReference>
<dbReference type="GO" id="GO:0003677">
    <property type="term" value="F:DNA binding"/>
    <property type="evidence" value="ECO:0007669"/>
    <property type="project" value="UniProtKB-KW"/>
</dbReference>
<dbReference type="GO" id="GO:0000981">
    <property type="term" value="F:DNA-binding transcription factor activity, RNA polymerase II-specific"/>
    <property type="evidence" value="ECO:0007669"/>
    <property type="project" value="InterPro"/>
</dbReference>
<dbReference type="GO" id="GO:0008270">
    <property type="term" value="F:zinc ion binding"/>
    <property type="evidence" value="ECO:0007669"/>
    <property type="project" value="InterPro"/>
</dbReference>
<dbReference type="GO" id="GO:0006351">
    <property type="term" value="P:DNA-templated transcription"/>
    <property type="evidence" value="ECO:0007669"/>
    <property type="project" value="InterPro"/>
</dbReference>
<dbReference type="GO" id="GO:2001317">
    <property type="term" value="P:kojic acid biosynthetic process"/>
    <property type="evidence" value="ECO:0000315"/>
    <property type="project" value="AspGD"/>
</dbReference>
<dbReference type="GO" id="GO:1900396">
    <property type="term" value="P:positive regulation of kojic acid biosynthetic process"/>
    <property type="evidence" value="ECO:0000315"/>
    <property type="project" value="AspGD"/>
</dbReference>
<dbReference type="GO" id="GO:1900378">
    <property type="term" value="P:positive regulation of secondary metabolite biosynthetic process"/>
    <property type="evidence" value="ECO:0000315"/>
    <property type="project" value="AspGD"/>
</dbReference>
<dbReference type="GO" id="GO:0009410">
    <property type="term" value="P:response to xenobiotic stimulus"/>
    <property type="evidence" value="ECO:0007669"/>
    <property type="project" value="TreeGrafter"/>
</dbReference>
<dbReference type="GO" id="GO:0044550">
    <property type="term" value="P:secondary metabolite biosynthetic process"/>
    <property type="evidence" value="ECO:0000315"/>
    <property type="project" value="AspGD"/>
</dbReference>
<dbReference type="CDD" id="cd12148">
    <property type="entry name" value="fungal_TF_MHR"/>
    <property type="match status" value="1"/>
</dbReference>
<dbReference type="CDD" id="cd00067">
    <property type="entry name" value="GAL4"/>
    <property type="match status" value="1"/>
</dbReference>
<dbReference type="Gene3D" id="4.10.240.10">
    <property type="entry name" value="Zn(2)-C6 fungal-type DNA-binding domain"/>
    <property type="match status" value="1"/>
</dbReference>
<dbReference type="InterPro" id="IPR052478">
    <property type="entry name" value="Metabolite_Synth_Reg"/>
</dbReference>
<dbReference type="InterPro" id="IPR007219">
    <property type="entry name" value="Transcription_factor_dom_fun"/>
</dbReference>
<dbReference type="InterPro" id="IPR036864">
    <property type="entry name" value="Zn2-C6_fun-type_DNA-bd_sf"/>
</dbReference>
<dbReference type="InterPro" id="IPR001138">
    <property type="entry name" value="Zn2Cys6_DnaBD"/>
</dbReference>
<dbReference type="PANTHER" id="PTHR31779">
    <property type="entry name" value="2-NITROPROPANE DIOXYGENASE FAMILY, PUTATIVE (AFU_ORTHOLOGUE AFUA_2G17430)-RELATED"/>
    <property type="match status" value="1"/>
</dbReference>
<dbReference type="PANTHER" id="PTHR31779:SF5">
    <property type="entry name" value="ZN(II)2CYS6 TRANSCRIPTION FACTOR (EUROFUNG)"/>
    <property type="match status" value="1"/>
</dbReference>
<dbReference type="Pfam" id="PF04082">
    <property type="entry name" value="Fungal_trans"/>
    <property type="match status" value="1"/>
</dbReference>
<dbReference type="Pfam" id="PF00172">
    <property type="entry name" value="Zn_clus"/>
    <property type="match status" value="1"/>
</dbReference>
<dbReference type="SMART" id="SM00906">
    <property type="entry name" value="Fungal_trans"/>
    <property type="match status" value="1"/>
</dbReference>
<dbReference type="SMART" id="SM00066">
    <property type="entry name" value="GAL4"/>
    <property type="match status" value="1"/>
</dbReference>
<dbReference type="SUPFAM" id="SSF57701">
    <property type="entry name" value="Zn2/Cys6 DNA-binding domain"/>
    <property type="match status" value="1"/>
</dbReference>
<dbReference type="PROSITE" id="PS00463">
    <property type="entry name" value="ZN2_CY6_FUNGAL_1"/>
    <property type="match status" value="1"/>
</dbReference>
<dbReference type="PROSITE" id="PS50048">
    <property type="entry name" value="ZN2_CY6_FUNGAL_2"/>
    <property type="match status" value="1"/>
</dbReference>
<gene>
    <name evidence="13" type="primary">kojR</name>
    <name type="ORF">AO090113000137</name>
</gene>
<protein>
    <recommendedName>
        <fullName evidence="13">Transcription factor kojR</fullName>
    </recommendedName>
    <alternativeName>
        <fullName evidence="13">Kojic acid biosynthesis cluster protein R</fullName>
    </alternativeName>
    <alternativeName>
        <fullName evidence="13">Kojic acid biosynthesis cluster regulator</fullName>
    </alternativeName>
</protein>
<evidence type="ECO:0000255" key="1">
    <source>
        <dbReference type="PROSITE-ProRule" id="PRU00227"/>
    </source>
</evidence>
<evidence type="ECO:0000256" key="2">
    <source>
        <dbReference type="SAM" id="MobiDB-lite"/>
    </source>
</evidence>
<evidence type="ECO:0000269" key="3">
    <source>
    </source>
</evidence>
<evidence type="ECO:0000269" key="4">
    <source>
    </source>
</evidence>
<evidence type="ECO:0000269" key="5">
    <source>
    </source>
</evidence>
<evidence type="ECO:0000269" key="6">
    <source>
    </source>
</evidence>
<evidence type="ECO:0000269" key="7">
    <source>
    </source>
</evidence>
<evidence type="ECO:0000269" key="8">
    <source>
    </source>
</evidence>
<evidence type="ECO:0000269" key="9">
    <source>
    </source>
</evidence>
<evidence type="ECO:0000269" key="10">
    <source>
    </source>
</evidence>
<evidence type="ECO:0000269" key="11">
    <source>
    </source>
</evidence>
<evidence type="ECO:0000269" key="12">
    <source>
    </source>
</evidence>
<evidence type="ECO:0000303" key="13">
    <source>
    </source>
</evidence>